<reference key="1">
    <citation type="journal article" date="1986" name="Mol. Cell. Biol.">
        <title>Two functional alpha-tubulin genes of the yeast Saccharomyces cerevisiae encode divergent proteins.</title>
        <authorList>
            <person name="Schatz P.J."/>
            <person name="Pillus L."/>
            <person name="Grisafi P."/>
            <person name="Solomon F."/>
            <person name="Botstein D."/>
        </authorList>
    </citation>
    <scope>NUCLEOTIDE SEQUENCE</scope>
</reference>
<reference key="2">
    <citation type="journal article" date="1997" name="Nature">
        <title>The nucleotide sequence of Saccharomyces cerevisiae chromosome XIII.</title>
        <authorList>
            <person name="Bowman S."/>
            <person name="Churcher C.M."/>
            <person name="Badcock K."/>
            <person name="Brown D."/>
            <person name="Chillingworth T."/>
            <person name="Connor R."/>
            <person name="Dedman K."/>
            <person name="Devlin K."/>
            <person name="Gentles S."/>
            <person name="Hamlin N."/>
            <person name="Hunt S."/>
            <person name="Jagels K."/>
            <person name="Lye G."/>
            <person name="Moule S."/>
            <person name="Odell C."/>
            <person name="Pearson D."/>
            <person name="Rajandream M.A."/>
            <person name="Rice P."/>
            <person name="Skelton J."/>
            <person name="Walsh S.V."/>
            <person name="Whitehead S."/>
            <person name="Barrell B.G."/>
        </authorList>
    </citation>
    <scope>NUCLEOTIDE SEQUENCE [LARGE SCALE GENOMIC DNA]</scope>
    <source>
        <strain>ATCC 204508 / S288c</strain>
    </source>
</reference>
<reference key="3">
    <citation type="journal article" date="2014" name="G3 (Bethesda)">
        <title>The reference genome sequence of Saccharomyces cerevisiae: Then and now.</title>
        <authorList>
            <person name="Engel S.R."/>
            <person name="Dietrich F.S."/>
            <person name="Fisk D.G."/>
            <person name="Binkley G."/>
            <person name="Balakrishnan R."/>
            <person name="Costanzo M.C."/>
            <person name="Dwight S.S."/>
            <person name="Hitz B.C."/>
            <person name="Karra K."/>
            <person name="Nash R.S."/>
            <person name="Weng S."/>
            <person name="Wong E.D."/>
            <person name="Lloyd P."/>
            <person name="Skrzypek M.S."/>
            <person name="Miyasato S.R."/>
            <person name="Simison M."/>
            <person name="Cherry J.M."/>
        </authorList>
    </citation>
    <scope>GENOME REANNOTATION</scope>
    <source>
        <strain>ATCC 204508 / S288c</strain>
    </source>
</reference>
<reference key="4">
    <citation type="journal article" date="1991" name="Mol. Cell. Biol.">
        <title>The PHO84 gene of Saccharomyces cerevisiae encodes an inorganic phosphate transporter.</title>
        <authorList>
            <person name="Bun-Ya M."/>
            <person name="Nishimura M."/>
            <person name="Harashima S."/>
            <person name="Oshima Y."/>
        </authorList>
    </citation>
    <scope>NUCLEOTIDE SEQUENCE [GENOMIC DNA] OF 1-170</scope>
</reference>
<reference key="5">
    <citation type="journal article" date="2003" name="Mol. Cell">
        <title>Assigning function to yeast proteins by integration of technologies.</title>
        <authorList>
            <person name="Hazbun T.R."/>
            <person name="Malmstroem L."/>
            <person name="Anderson S."/>
            <person name="Graczyk B.J."/>
            <person name="Fox B."/>
            <person name="Riffle M."/>
            <person name="Sundin B.A."/>
            <person name="Aranda J.D."/>
            <person name="McDonald W.H."/>
            <person name="Chiu C.-H."/>
            <person name="Snydsman B.E."/>
            <person name="Bradley P."/>
            <person name="Muller E.G.D."/>
            <person name="Fields S."/>
            <person name="Baker D."/>
            <person name="Yates J.R. III"/>
            <person name="Davis T.N."/>
        </authorList>
    </citation>
    <scope>IDENTIFICATION BY MASS SPECTROMETRY</scope>
</reference>
<reference key="6">
    <citation type="journal article" date="2003" name="Nature">
        <title>Global analysis of protein expression in yeast.</title>
        <authorList>
            <person name="Ghaemmaghami S."/>
            <person name="Huh W.-K."/>
            <person name="Bower K."/>
            <person name="Howson R.W."/>
            <person name="Belle A."/>
            <person name="Dephoure N."/>
            <person name="O'Shea E.K."/>
            <person name="Weissman J.S."/>
        </authorList>
    </citation>
    <scope>LEVEL OF PROTEIN EXPRESSION [LARGE SCALE ANALYSIS]</scope>
</reference>
<reference key="7">
    <citation type="journal article" date="2001" name="J. Cell Biol.">
        <title>Cortical Num1p interacts with the dynein intermediate chain Pac11p and cytoplasmic microtubules in budding yeast.</title>
        <authorList>
            <person name="Farkasovsky M."/>
            <person name="Kuentzel H."/>
        </authorList>
    </citation>
    <scope>INTERACTION WITH NUM1</scope>
</reference>
<organism>
    <name type="scientific">Saccharomyces cerevisiae (strain ATCC 204508 / S288c)</name>
    <name type="common">Baker's yeast</name>
    <dbReference type="NCBI Taxonomy" id="559292"/>
    <lineage>
        <taxon>Eukaryota</taxon>
        <taxon>Fungi</taxon>
        <taxon>Dikarya</taxon>
        <taxon>Ascomycota</taxon>
        <taxon>Saccharomycotina</taxon>
        <taxon>Saccharomycetes</taxon>
        <taxon>Saccharomycetales</taxon>
        <taxon>Saccharomycetaceae</taxon>
        <taxon>Saccharomyces</taxon>
    </lineage>
</organism>
<comment type="function">
    <text>Tubulin is the major constituent of microtubules, a cylinder consisting of laterally associated linear protofilaments composed of alpha- and beta-tubulin heterodimers. Microtubules grow by the addition of GTP-tubulin dimers to the microtubule end, where a stabilizing cap forms. Below the cap, tubulin dimers are in GDP-bound state, owing to GTPase activity of alpha-tubulin.</text>
</comment>
<comment type="catalytic activity">
    <reaction evidence="1">
        <text>GTP + H2O = GDP + phosphate + H(+)</text>
        <dbReference type="Rhea" id="RHEA:19669"/>
        <dbReference type="ChEBI" id="CHEBI:15377"/>
        <dbReference type="ChEBI" id="CHEBI:15378"/>
        <dbReference type="ChEBI" id="CHEBI:37565"/>
        <dbReference type="ChEBI" id="CHEBI:43474"/>
        <dbReference type="ChEBI" id="CHEBI:58189"/>
    </reaction>
    <physiologicalReaction direction="left-to-right" evidence="1">
        <dbReference type="Rhea" id="RHEA:19670"/>
    </physiologicalReaction>
</comment>
<comment type="cofactor">
    <cofactor evidence="1">
        <name>Mg(2+)</name>
        <dbReference type="ChEBI" id="CHEBI:18420"/>
    </cofactor>
</comment>
<comment type="subunit">
    <text evidence="2">Dimer of alpha and beta chains. A typical microtubule is a hollow water-filled tube with an outer diameter of 25 nm and an inner diameter of 15 nM. Alpha-beta heterodimers associate head-to-tail to form protofilaments running lengthwise along the microtubule wall with the beta-tubulin subunit facing the microtubule plus end conferring a structural polarity. Microtubules usually have 13 protofilaments but different protofilament numbers can be found in some organisms and specialized cells. Interacts with NUM1.</text>
</comment>
<comment type="interaction">
    <interactant intactId="EBI-18981">
        <id>P09734</id>
    </interactant>
    <interactant intactId="EBI-12386">
        <id>Q00402</id>
        <label>NUM1</label>
    </interactant>
    <organismsDiffer>false</organismsDiffer>
    <experiments>2</experiments>
</comment>
<comment type="subcellular location">
    <subcellularLocation>
        <location>Cytoplasm</location>
        <location>Cytoskeleton</location>
    </subcellularLocation>
</comment>
<comment type="miscellaneous">
    <text evidence="3">Present with 12300 molecules/cell in log phase SD medium.</text>
</comment>
<comment type="similarity">
    <text evidence="4">Belongs to the tubulin family.</text>
</comment>
<gene>
    <name type="primary">TUB3</name>
    <name type="ordered locus">YML124C</name>
    <name type="ORF">YM7056.02C</name>
</gene>
<keyword id="KW-0963">Cytoplasm</keyword>
<keyword id="KW-0206">Cytoskeleton</keyword>
<keyword id="KW-0342">GTP-binding</keyword>
<keyword id="KW-0378">Hydrolase</keyword>
<keyword id="KW-0460">Magnesium</keyword>
<keyword id="KW-0479">Metal-binding</keyword>
<keyword id="KW-0493">Microtubule</keyword>
<keyword id="KW-0547">Nucleotide-binding</keyword>
<keyword id="KW-1185">Reference proteome</keyword>
<protein>
    <recommendedName>
        <fullName>Tubulin alpha-3 chain</fullName>
        <ecNumber evidence="1">3.6.5.-</ecNumber>
    </recommendedName>
</protein>
<name>TBA3_YEAST</name>
<evidence type="ECO:0000250" key="1">
    <source>
        <dbReference type="UniProtKB" id="P68363"/>
    </source>
</evidence>
<evidence type="ECO:0000269" key="2">
    <source>
    </source>
</evidence>
<evidence type="ECO:0000269" key="3">
    <source>
    </source>
</evidence>
<evidence type="ECO:0000305" key="4"/>
<proteinExistence type="evidence at protein level"/>
<feature type="chain" id="PRO_0000048240" description="Tubulin alpha-3 chain">
    <location>
        <begin position="1"/>
        <end position="445"/>
    </location>
</feature>
<feature type="active site" evidence="1">
    <location>
        <position position="255"/>
    </location>
</feature>
<feature type="binding site" evidence="1">
    <location>
        <position position="11"/>
    </location>
    <ligand>
        <name>GTP</name>
        <dbReference type="ChEBI" id="CHEBI:37565"/>
    </ligand>
</feature>
<feature type="binding site" evidence="1">
    <location>
        <position position="72"/>
    </location>
    <ligand>
        <name>GTP</name>
        <dbReference type="ChEBI" id="CHEBI:37565"/>
    </ligand>
</feature>
<feature type="binding site" evidence="1">
    <location>
        <position position="72"/>
    </location>
    <ligand>
        <name>Mg(2+)</name>
        <dbReference type="ChEBI" id="CHEBI:18420"/>
    </ligand>
</feature>
<feature type="binding site" evidence="1">
    <location>
        <position position="141"/>
    </location>
    <ligand>
        <name>GTP</name>
        <dbReference type="ChEBI" id="CHEBI:37565"/>
    </ligand>
</feature>
<feature type="binding site" evidence="1">
    <location>
        <position position="145"/>
    </location>
    <ligand>
        <name>GTP</name>
        <dbReference type="ChEBI" id="CHEBI:37565"/>
    </ligand>
</feature>
<feature type="binding site" evidence="1">
    <location>
        <position position="146"/>
    </location>
    <ligand>
        <name>GTP</name>
        <dbReference type="ChEBI" id="CHEBI:37565"/>
    </ligand>
</feature>
<feature type="binding site" evidence="1">
    <location>
        <position position="180"/>
    </location>
    <ligand>
        <name>GTP</name>
        <dbReference type="ChEBI" id="CHEBI:37565"/>
    </ligand>
</feature>
<feature type="binding site" evidence="1">
    <location>
        <position position="207"/>
    </location>
    <ligand>
        <name>GTP</name>
        <dbReference type="ChEBI" id="CHEBI:37565"/>
    </ligand>
</feature>
<feature type="binding site" evidence="1">
    <location>
        <position position="229"/>
    </location>
    <ligand>
        <name>GTP</name>
        <dbReference type="ChEBI" id="CHEBI:37565"/>
    </ligand>
</feature>
<accession>P09734</accession>
<accession>D6W0G1</accession>
<dbReference type="EC" id="3.6.5.-" evidence="1"/>
<dbReference type="EMBL" id="M28428">
    <property type="protein sequence ID" value="AAA35181.1"/>
    <property type="molecule type" value="mRNA"/>
</dbReference>
<dbReference type="EMBL" id="Z49218">
    <property type="protein sequence ID" value="CAA89156.1"/>
    <property type="molecule type" value="Genomic_DNA"/>
</dbReference>
<dbReference type="EMBL" id="D90346">
    <property type="status" value="NOT_ANNOTATED_CDS"/>
    <property type="molecule type" value="Genomic_DNA"/>
</dbReference>
<dbReference type="EMBL" id="BK006946">
    <property type="protein sequence ID" value="DAA09775.1"/>
    <property type="molecule type" value="Genomic_DNA"/>
</dbReference>
<dbReference type="PIR" id="B25076">
    <property type="entry name" value="B25076"/>
</dbReference>
<dbReference type="RefSeq" id="NP_013582.1">
    <property type="nucleotide sequence ID" value="NM_001182487.1"/>
</dbReference>
<dbReference type="SMR" id="P09734"/>
<dbReference type="BioGRID" id="35081">
    <property type="interactions" value="499"/>
</dbReference>
<dbReference type="ComplexPortal" id="CPX-1425">
    <property type="entry name" value="Tubulin alpha-beta heterodimeric complex, TUB3 variant"/>
</dbReference>
<dbReference type="DIP" id="DIP-2206N"/>
<dbReference type="FunCoup" id="P09734">
    <property type="interactions" value="1024"/>
</dbReference>
<dbReference type="IntAct" id="P09734">
    <property type="interactions" value="111"/>
</dbReference>
<dbReference type="MINT" id="P09734"/>
<dbReference type="STRING" id="4932.YML124C"/>
<dbReference type="iPTMnet" id="P09734"/>
<dbReference type="PaxDb" id="4932-YML124C"/>
<dbReference type="PeptideAtlas" id="P09734"/>
<dbReference type="EnsemblFungi" id="YML124C_mRNA">
    <property type="protein sequence ID" value="YML124C"/>
    <property type="gene ID" value="YML124C"/>
</dbReference>
<dbReference type="GeneID" id="854915"/>
<dbReference type="KEGG" id="sce:YML124C"/>
<dbReference type="AGR" id="SGD:S000004593"/>
<dbReference type="SGD" id="S000004593">
    <property type="gene designation" value="TUB3"/>
</dbReference>
<dbReference type="VEuPathDB" id="FungiDB:YML124C"/>
<dbReference type="eggNOG" id="KOG1376">
    <property type="taxonomic scope" value="Eukaryota"/>
</dbReference>
<dbReference type="GeneTree" id="ENSGT00940000164588"/>
<dbReference type="HOGENOM" id="CLU_015718_0_0_1"/>
<dbReference type="InParanoid" id="P09734"/>
<dbReference type="OMA" id="DGTMPTQ"/>
<dbReference type="OrthoDB" id="1662883at2759"/>
<dbReference type="BioCyc" id="YEAST:G3O-32703-MONOMER"/>
<dbReference type="Reactome" id="R-SCE-114608">
    <property type="pathway name" value="Platelet degranulation"/>
</dbReference>
<dbReference type="BioGRID-ORCS" id="854915">
    <property type="hits" value="9 hits in 10 CRISPR screens"/>
</dbReference>
<dbReference type="CD-CODE" id="876000F7">
    <property type="entry name" value="Centrosome"/>
</dbReference>
<dbReference type="PRO" id="PR:P09734"/>
<dbReference type="Proteomes" id="UP000002311">
    <property type="component" value="Chromosome XIII"/>
</dbReference>
<dbReference type="RNAct" id="P09734">
    <property type="molecule type" value="protein"/>
</dbReference>
<dbReference type="GO" id="GO:0005737">
    <property type="term" value="C:cytoplasm"/>
    <property type="evidence" value="ECO:0000318"/>
    <property type="project" value="GO_Central"/>
</dbReference>
<dbReference type="GO" id="GO:0005874">
    <property type="term" value="C:microtubule"/>
    <property type="evidence" value="ECO:0000318"/>
    <property type="project" value="GO_Central"/>
</dbReference>
<dbReference type="GO" id="GO:0005634">
    <property type="term" value="C:nucleus"/>
    <property type="evidence" value="ECO:0000318"/>
    <property type="project" value="GO_Central"/>
</dbReference>
<dbReference type="GO" id="GO:0005819">
    <property type="term" value="C:spindle"/>
    <property type="evidence" value="ECO:0007005"/>
    <property type="project" value="SGD"/>
</dbReference>
<dbReference type="GO" id="GO:0045298">
    <property type="term" value="C:tubulin complex"/>
    <property type="evidence" value="ECO:0000316"/>
    <property type="project" value="SGD"/>
</dbReference>
<dbReference type="GO" id="GO:0005525">
    <property type="term" value="F:GTP binding"/>
    <property type="evidence" value="ECO:0000318"/>
    <property type="project" value="GO_Central"/>
</dbReference>
<dbReference type="GO" id="GO:0016787">
    <property type="term" value="F:hydrolase activity"/>
    <property type="evidence" value="ECO:0007669"/>
    <property type="project" value="UniProtKB-KW"/>
</dbReference>
<dbReference type="GO" id="GO:0046872">
    <property type="term" value="F:metal ion binding"/>
    <property type="evidence" value="ECO:0007669"/>
    <property type="project" value="UniProtKB-KW"/>
</dbReference>
<dbReference type="GO" id="GO:0005200">
    <property type="term" value="F:structural constituent of cytoskeleton"/>
    <property type="evidence" value="ECO:0000315"/>
    <property type="project" value="SGD"/>
</dbReference>
<dbReference type="GO" id="GO:0045143">
    <property type="term" value="P:homologous chromosome segregation"/>
    <property type="evidence" value="ECO:0000305"/>
    <property type="project" value="SGD"/>
</dbReference>
<dbReference type="GO" id="GO:0000226">
    <property type="term" value="P:microtubule cytoskeleton organization"/>
    <property type="evidence" value="ECO:0000250"/>
    <property type="project" value="ComplexPortal"/>
</dbReference>
<dbReference type="GO" id="GO:0000278">
    <property type="term" value="P:mitotic cell cycle"/>
    <property type="evidence" value="ECO:0000318"/>
    <property type="project" value="GO_Central"/>
</dbReference>
<dbReference type="GO" id="GO:0000070">
    <property type="term" value="P:mitotic sister chromatid segregation"/>
    <property type="evidence" value="ECO:0000305"/>
    <property type="project" value="SGD"/>
</dbReference>
<dbReference type="GO" id="GO:0000280">
    <property type="term" value="P:nuclear division"/>
    <property type="evidence" value="ECO:0000318"/>
    <property type="project" value="GO_Central"/>
</dbReference>
<dbReference type="GO" id="GO:0030473">
    <property type="term" value="P:nuclear migration along microtubule"/>
    <property type="evidence" value="ECO:0000305"/>
    <property type="project" value="SGD"/>
</dbReference>
<dbReference type="GO" id="GO:0098863">
    <property type="term" value="P:nuclear migration by microtubule mediated pushing forces"/>
    <property type="evidence" value="ECO:0000318"/>
    <property type="project" value="GO_Central"/>
</dbReference>
<dbReference type="CDD" id="cd02186">
    <property type="entry name" value="alpha_tubulin"/>
    <property type="match status" value="1"/>
</dbReference>
<dbReference type="FunFam" id="1.10.287.600:FF:000005">
    <property type="entry name" value="Tubulin alpha chain"/>
    <property type="match status" value="1"/>
</dbReference>
<dbReference type="FunFam" id="3.30.1330.20:FF:000001">
    <property type="entry name" value="Tubulin alpha chain"/>
    <property type="match status" value="1"/>
</dbReference>
<dbReference type="FunFam" id="3.40.50.1440:FF:000008">
    <property type="entry name" value="Tubulin alpha chain"/>
    <property type="match status" value="1"/>
</dbReference>
<dbReference type="Gene3D" id="1.10.287.600">
    <property type="entry name" value="Helix hairpin bin"/>
    <property type="match status" value="1"/>
</dbReference>
<dbReference type="Gene3D" id="3.30.1330.20">
    <property type="entry name" value="Tubulin/FtsZ, C-terminal domain"/>
    <property type="match status" value="1"/>
</dbReference>
<dbReference type="Gene3D" id="3.40.50.1440">
    <property type="entry name" value="Tubulin/FtsZ, GTPase domain"/>
    <property type="match status" value="1"/>
</dbReference>
<dbReference type="InterPro" id="IPR002452">
    <property type="entry name" value="Alpha_tubulin"/>
</dbReference>
<dbReference type="InterPro" id="IPR008280">
    <property type="entry name" value="Tub_FtsZ_C"/>
</dbReference>
<dbReference type="InterPro" id="IPR000217">
    <property type="entry name" value="Tubulin"/>
</dbReference>
<dbReference type="InterPro" id="IPR037103">
    <property type="entry name" value="Tubulin/FtsZ-like_C"/>
</dbReference>
<dbReference type="InterPro" id="IPR018316">
    <property type="entry name" value="Tubulin/FtsZ_2-layer-sand-dom"/>
</dbReference>
<dbReference type="InterPro" id="IPR036525">
    <property type="entry name" value="Tubulin/FtsZ_GTPase_sf"/>
</dbReference>
<dbReference type="InterPro" id="IPR023123">
    <property type="entry name" value="Tubulin_C"/>
</dbReference>
<dbReference type="InterPro" id="IPR017975">
    <property type="entry name" value="Tubulin_CS"/>
</dbReference>
<dbReference type="InterPro" id="IPR003008">
    <property type="entry name" value="Tubulin_FtsZ_GTPase"/>
</dbReference>
<dbReference type="PANTHER" id="PTHR11588">
    <property type="entry name" value="TUBULIN"/>
    <property type="match status" value="1"/>
</dbReference>
<dbReference type="Pfam" id="PF00091">
    <property type="entry name" value="Tubulin"/>
    <property type="match status" value="1"/>
</dbReference>
<dbReference type="Pfam" id="PF03953">
    <property type="entry name" value="Tubulin_C"/>
    <property type="match status" value="1"/>
</dbReference>
<dbReference type="PRINTS" id="PR01162">
    <property type="entry name" value="ALPHATUBULIN"/>
</dbReference>
<dbReference type="PRINTS" id="PR01161">
    <property type="entry name" value="TUBULIN"/>
</dbReference>
<dbReference type="SMART" id="SM00864">
    <property type="entry name" value="Tubulin"/>
    <property type="match status" value="1"/>
</dbReference>
<dbReference type="SMART" id="SM00865">
    <property type="entry name" value="Tubulin_C"/>
    <property type="match status" value="1"/>
</dbReference>
<dbReference type="SUPFAM" id="SSF55307">
    <property type="entry name" value="Tubulin C-terminal domain-like"/>
    <property type="match status" value="1"/>
</dbReference>
<dbReference type="SUPFAM" id="SSF52490">
    <property type="entry name" value="Tubulin nucleotide-binding domain-like"/>
    <property type="match status" value="1"/>
</dbReference>
<dbReference type="PROSITE" id="PS00227">
    <property type="entry name" value="TUBULIN"/>
    <property type="match status" value="1"/>
</dbReference>
<sequence>MREVISINVGQAGCQIGNACWELYSLEHGIKEDGHLEDGLSKPKGGEEGFSTFFHETGYGKFVPRAIYVDLEPNVIDEVRTGRFKELFHPEQLINGKEDAANNYARGHYTVGREIVDEVEERIRKMADQCDGLQGFLFTHSLGGGTGSGLGSLLLENLSYEYGKKSKLEFAVYPAPQLSTSVVEPYNTVLTTHTTLEHADCTFMVDNEAIYDICKRNLGISRPSFSNLNGLIAQVISSVTASLRFDGSLNVDLNEFQTNLVPYPRIHFPLVSYAPILSKKRATHESNSVSEITNACFEPGNQMVKCDPTKGKYMANCLLYRGDVVTRDVQRAVEQVKNKKTVQMVDWCPTGFKIGICYEPPSVIPSSELANVDRAVCMLSNTTAIADAWKRIDQKFDLMYAKRAFVHWYVGEGMEEGEFTEAREDLAALERDYIEVGADSYAEEF</sequence>